<comment type="subcellular location">
    <subcellularLocation>
        <location evidence="2">Cell membrane</location>
        <topology evidence="2">Multi-pass membrane protein</topology>
    </subcellularLocation>
</comment>
<comment type="similarity">
    <text evidence="2">Belongs to the MscS (TC 1.A.23) family.</text>
</comment>
<organism>
    <name type="scientific">Synechocystis sp. (strain ATCC 27184 / PCC 6803 / Kazusa)</name>
    <dbReference type="NCBI Taxonomy" id="1111708"/>
    <lineage>
        <taxon>Bacteria</taxon>
        <taxon>Bacillati</taxon>
        <taxon>Cyanobacteriota</taxon>
        <taxon>Cyanophyceae</taxon>
        <taxon>Synechococcales</taxon>
        <taxon>Merismopediaceae</taxon>
        <taxon>Synechocystis</taxon>
    </lineage>
</organism>
<name>Y639_SYNY3</name>
<keyword id="KW-1003">Cell membrane</keyword>
<keyword id="KW-0472">Membrane</keyword>
<keyword id="KW-1185">Reference proteome</keyword>
<keyword id="KW-0812">Transmembrane</keyword>
<keyword id="KW-1133">Transmembrane helix</keyword>
<reference key="1">
    <citation type="journal article" date="1995" name="DNA Res.">
        <title>Sequence analysis of the genome of the unicellular cyanobacterium Synechocystis sp. strain PCC6803. I. Sequence features in the 1 Mb region from map positions 64% to 92% of the genome.</title>
        <authorList>
            <person name="Kaneko T."/>
            <person name="Tanaka A."/>
            <person name="Sato S."/>
            <person name="Kotani H."/>
            <person name="Sazuka T."/>
            <person name="Miyajima N."/>
            <person name="Sugiura M."/>
            <person name="Tabata S."/>
        </authorList>
    </citation>
    <scope>NUCLEOTIDE SEQUENCE [LARGE SCALE GENOMIC DNA]</scope>
    <source>
        <strain>ATCC 27184 / PCC 6803 / N-1</strain>
    </source>
</reference>
<reference key="2">
    <citation type="journal article" date="1996" name="DNA Res.">
        <title>Sequence analysis of the genome of the unicellular cyanobacterium Synechocystis sp. strain PCC6803. II. Sequence determination of the entire genome and assignment of potential protein-coding regions.</title>
        <authorList>
            <person name="Kaneko T."/>
            <person name="Sato S."/>
            <person name="Kotani H."/>
            <person name="Tanaka A."/>
            <person name="Asamizu E."/>
            <person name="Nakamura Y."/>
            <person name="Miyajima N."/>
            <person name="Hirosawa M."/>
            <person name="Sugiura M."/>
            <person name="Sasamoto S."/>
            <person name="Kimura T."/>
            <person name="Hosouchi T."/>
            <person name="Matsuno A."/>
            <person name="Muraki A."/>
            <person name="Nakazaki N."/>
            <person name="Naruo K."/>
            <person name="Okumura S."/>
            <person name="Shimpo S."/>
            <person name="Takeuchi C."/>
            <person name="Wada T."/>
            <person name="Watanabe A."/>
            <person name="Yamada M."/>
            <person name="Yasuda M."/>
            <person name="Tabata S."/>
        </authorList>
    </citation>
    <scope>NUCLEOTIDE SEQUENCE [LARGE SCALE GENOMIC DNA]</scope>
    <source>
        <strain>ATCC 27184 / PCC 6803 / Kazusa</strain>
    </source>
</reference>
<sequence>MVNLLFLFFIMSFFPNNIFDYDQQAITDLLITASLKILFALAILLIGFWLSKRLQKLIIRALRKSNLEPTFISFAGNISYYLLLVVFFVLCLAQLGIQTSSLVALLGASTLAIGLALQGSLANVAGGILLVLFNYFRVGERIEVAGIEGIVESIEILSTTICTYDNRLVTIPNKQIIENNIINHVGKPERRIDLVIGVGYEEDIDHVRSSLQWVIDQNSEVCTEPAPTIALGELGDSSVNFYVRPWVKSEDYFRLKLQLTEAIKRKLDEENISIPFPQRDVHLIQPETKELDIKAA</sequence>
<feature type="chain" id="PRO_0000110251" description="Uncharacterized MscS family protein slr0639">
    <location>
        <begin position="1"/>
        <end position="296"/>
    </location>
</feature>
<feature type="transmembrane region" description="Helical" evidence="1">
    <location>
        <begin position="1"/>
        <end position="21"/>
    </location>
</feature>
<feature type="transmembrane region" description="Helical" evidence="1">
    <location>
        <begin position="30"/>
        <end position="50"/>
    </location>
</feature>
<feature type="transmembrane region" description="Helical" evidence="1">
    <location>
        <begin position="71"/>
        <end position="91"/>
    </location>
</feature>
<feature type="transmembrane region" description="Helical" evidence="1">
    <location>
        <begin position="92"/>
        <end position="112"/>
    </location>
</feature>
<feature type="transmembrane region" description="Helical" evidence="1">
    <location>
        <begin position="113"/>
        <end position="133"/>
    </location>
</feature>
<feature type="transmembrane region" description="Helical" evidence="1">
    <location>
        <begin position="142"/>
        <end position="162"/>
    </location>
</feature>
<gene>
    <name type="ordered locus">slr0639</name>
</gene>
<proteinExistence type="inferred from homology"/>
<evidence type="ECO:0000255" key="1"/>
<evidence type="ECO:0000305" key="2"/>
<accession>Q55717</accession>
<dbReference type="EMBL" id="BA000022">
    <property type="protein sequence ID" value="BAA10358.1"/>
    <property type="molecule type" value="Genomic_DNA"/>
</dbReference>
<dbReference type="PIR" id="S76512">
    <property type="entry name" value="S76512"/>
</dbReference>
<dbReference type="SMR" id="Q55717"/>
<dbReference type="FunCoup" id="Q55717">
    <property type="interactions" value="66"/>
</dbReference>
<dbReference type="IntAct" id="Q55717">
    <property type="interactions" value="1"/>
</dbReference>
<dbReference type="STRING" id="1148.gene:10499859"/>
<dbReference type="PaxDb" id="1148-1001627"/>
<dbReference type="EnsemblBacteria" id="BAA10358">
    <property type="protein sequence ID" value="BAA10358"/>
    <property type="gene ID" value="BAA10358"/>
</dbReference>
<dbReference type="KEGG" id="syn:slr0639"/>
<dbReference type="eggNOG" id="COG0668">
    <property type="taxonomic scope" value="Bacteria"/>
</dbReference>
<dbReference type="InParanoid" id="Q55717"/>
<dbReference type="PhylomeDB" id="Q55717"/>
<dbReference type="Proteomes" id="UP000001425">
    <property type="component" value="Chromosome"/>
</dbReference>
<dbReference type="GO" id="GO:0005886">
    <property type="term" value="C:plasma membrane"/>
    <property type="evidence" value="ECO:0007669"/>
    <property type="project" value="UniProtKB-SubCell"/>
</dbReference>
<dbReference type="GO" id="GO:0008381">
    <property type="term" value="F:mechanosensitive monoatomic ion channel activity"/>
    <property type="evidence" value="ECO:0007669"/>
    <property type="project" value="InterPro"/>
</dbReference>
<dbReference type="Gene3D" id="1.10.287.1260">
    <property type="match status" value="1"/>
</dbReference>
<dbReference type="Gene3D" id="2.30.30.60">
    <property type="match status" value="1"/>
</dbReference>
<dbReference type="Gene3D" id="3.30.70.100">
    <property type="match status" value="1"/>
</dbReference>
<dbReference type="InterPro" id="IPR010920">
    <property type="entry name" value="LSM_dom_sf"/>
</dbReference>
<dbReference type="InterPro" id="IPR049142">
    <property type="entry name" value="MS_channel_1st"/>
</dbReference>
<dbReference type="InterPro" id="IPR049278">
    <property type="entry name" value="MS_channel_C"/>
</dbReference>
<dbReference type="InterPro" id="IPR008910">
    <property type="entry name" value="MSC_TM_helix"/>
</dbReference>
<dbReference type="InterPro" id="IPR045275">
    <property type="entry name" value="MscS_archaea/bacteria_type"/>
</dbReference>
<dbReference type="InterPro" id="IPR023408">
    <property type="entry name" value="MscS_beta-dom_sf"/>
</dbReference>
<dbReference type="InterPro" id="IPR006685">
    <property type="entry name" value="MscS_channel_2nd"/>
</dbReference>
<dbReference type="InterPro" id="IPR011066">
    <property type="entry name" value="MscS_channel_C_sf"/>
</dbReference>
<dbReference type="InterPro" id="IPR006686">
    <property type="entry name" value="MscS_channel_CS"/>
</dbReference>
<dbReference type="InterPro" id="IPR011014">
    <property type="entry name" value="MscS_channel_TM-2"/>
</dbReference>
<dbReference type="PANTHER" id="PTHR30221">
    <property type="entry name" value="SMALL-CONDUCTANCE MECHANOSENSITIVE CHANNEL"/>
    <property type="match status" value="1"/>
</dbReference>
<dbReference type="PANTHER" id="PTHR30221:SF1">
    <property type="entry name" value="SMALL-CONDUCTANCE MECHANOSENSITIVE CHANNEL"/>
    <property type="match status" value="1"/>
</dbReference>
<dbReference type="Pfam" id="PF21088">
    <property type="entry name" value="MS_channel_1st"/>
    <property type="match status" value="1"/>
</dbReference>
<dbReference type="Pfam" id="PF05552">
    <property type="entry name" value="MS_channel_1st_1"/>
    <property type="match status" value="1"/>
</dbReference>
<dbReference type="Pfam" id="PF00924">
    <property type="entry name" value="MS_channel_2nd"/>
    <property type="match status" value="1"/>
</dbReference>
<dbReference type="Pfam" id="PF21082">
    <property type="entry name" value="MS_channel_3rd"/>
    <property type="match status" value="1"/>
</dbReference>
<dbReference type="SUPFAM" id="SSF82689">
    <property type="entry name" value="Mechanosensitive channel protein MscS (YggB), C-terminal domain"/>
    <property type="match status" value="1"/>
</dbReference>
<dbReference type="SUPFAM" id="SSF82861">
    <property type="entry name" value="Mechanosensitive channel protein MscS (YggB), transmembrane region"/>
    <property type="match status" value="1"/>
</dbReference>
<dbReference type="SUPFAM" id="SSF50182">
    <property type="entry name" value="Sm-like ribonucleoproteins"/>
    <property type="match status" value="1"/>
</dbReference>
<dbReference type="PROSITE" id="PS01246">
    <property type="entry name" value="UPF0003"/>
    <property type="match status" value="1"/>
</dbReference>
<protein>
    <recommendedName>
        <fullName>Uncharacterized MscS family protein slr0639</fullName>
    </recommendedName>
</protein>